<reference key="1">
    <citation type="submission" date="2006-10" db="EMBL/GenBank/DDBJ databases">
        <authorList>
            <person name="Fleischmann R.D."/>
            <person name="Dodson R.J."/>
            <person name="Haft D.H."/>
            <person name="Merkel J.S."/>
            <person name="Nelson W.C."/>
            <person name="Fraser C.M."/>
        </authorList>
    </citation>
    <scope>NUCLEOTIDE SEQUENCE [LARGE SCALE GENOMIC DNA]</scope>
    <source>
        <strain>ATCC 700084 / mc(2)155</strain>
    </source>
</reference>
<reference key="2">
    <citation type="journal article" date="2007" name="Genome Biol.">
        <title>Interrupted coding sequences in Mycobacterium smegmatis: authentic mutations or sequencing errors?</title>
        <authorList>
            <person name="Deshayes C."/>
            <person name="Perrodou E."/>
            <person name="Gallien S."/>
            <person name="Euphrasie D."/>
            <person name="Schaeffer C."/>
            <person name="Van-Dorsselaer A."/>
            <person name="Poch O."/>
            <person name="Lecompte O."/>
            <person name="Reyrat J.-M."/>
        </authorList>
    </citation>
    <scope>NUCLEOTIDE SEQUENCE [LARGE SCALE GENOMIC DNA]</scope>
    <source>
        <strain>ATCC 700084 / mc(2)155</strain>
    </source>
</reference>
<reference key="3">
    <citation type="journal article" date="2009" name="Genome Res.">
        <title>Ortho-proteogenomics: multiple proteomes investigation through orthology and a new MS-based protocol.</title>
        <authorList>
            <person name="Gallien S."/>
            <person name="Perrodou E."/>
            <person name="Carapito C."/>
            <person name="Deshayes C."/>
            <person name="Reyrat J.-M."/>
            <person name="Van Dorsselaer A."/>
            <person name="Poch O."/>
            <person name="Schaeffer C."/>
            <person name="Lecompte O."/>
        </authorList>
    </citation>
    <scope>NUCLEOTIDE SEQUENCE [LARGE SCALE GENOMIC DNA]</scope>
    <source>
        <strain>ATCC 700084 / mc(2)155</strain>
    </source>
</reference>
<reference key="4">
    <citation type="journal article" date="2005" name="Nat. Struct. Mol. Biol.">
        <title>Mechanism of nonhomologous end-joining in mycobacteria: a low-fidelity repair system driven by Ku, ligase D and ligase C.</title>
        <authorList>
            <person name="Gong C."/>
            <person name="Bongiorno P."/>
            <person name="Martins A."/>
            <person name="Stephanou N.C."/>
            <person name="Zhu H."/>
            <person name="Shuman S."/>
            <person name="Glickman M.S."/>
        </authorList>
    </citation>
    <scope>FUNCTION</scope>
    <scope>DISRUPTION PHENOTYPE</scope>
    <source>
        <strain>ATCC 700084 / mc(2)155</strain>
    </source>
</reference>
<reference key="5">
    <citation type="journal article" date="2006" name="Mol. Cell">
        <title>Mycobacteriophage exploit NHEJ to facilitate genome circularization.</title>
        <authorList>
            <person name="Pitcher R.S."/>
            <person name="Tonkin L.M."/>
            <person name="Daley J.M."/>
            <person name="Palmbos P.L."/>
            <person name="Green A.J."/>
            <person name="Velting T.L."/>
            <person name="Brzostek A."/>
            <person name="Korycka-Machala M."/>
            <person name="Cresawn S."/>
            <person name="Dziadek J."/>
            <person name="Hatfull G.F."/>
            <person name="Wilson T.E."/>
            <person name="Doherty A.J."/>
        </authorList>
    </citation>
    <scope>FUNCTION</scope>
    <source>
        <strain>ATCC 700084 / mc(2)155</strain>
    </source>
</reference>
<reference key="6">
    <citation type="journal article" date="2007" name="DNA Repair">
        <title>NHEJ protects mycobacteria in stationary phase against the harmful effects of desiccation.</title>
        <authorList>
            <person name="Pitcher R.S."/>
            <person name="Green A.J."/>
            <person name="Brzostek A."/>
            <person name="Korycka-Machala M."/>
            <person name="Dziadek J."/>
            <person name="Doherty A.J."/>
        </authorList>
    </citation>
    <scope>FUNCTION</scope>
    <scope>DISRUPTION PHENOTYPE</scope>
    <source>
        <strain>ATCC 700084 / mc(2)155</strain>
    </source>
</reference>
<reference key="7">
    <citation type="journal article" date="2007" name="J. Bacteriol.">
        <title>Mycobacterial nonhomologous end joining mediates mutagenic repair of chromosomal double-strand DNA breaks.</title>
        <authorList>
            <person name="Stephanou N.C."/>
            <person name="Gao F."/>
            <person name="Bongiorno P."/>
            <person name="Ehrt S."/>
            <person name="Schnappinger D."/>
            <person name="Shuman S."/>
            <person name="Glickman M.S."/>
        </authorList>
    </citation>
    <scope>DISRUPTION PHENOTYPE</scope>
    <source>
        <strain>ATCC 700084 / mc(2)155</strain>
    </source>
</reference>
<reference key="8">
    <citation type="journal article" date="2008" name="Genes Dev.">
        <title>The pathways and outcomes of mycobacterial NHEJ depend on the structure of the broken DNA ends.</title>
        <authorList>
            <person name="Aniukwu J."/>
            <person name="Glickman M.S."/>
            <person name="Shuman S."/>
        </authorList>
    </citation>
    <scope>FUNCTION</scope>
    <scope>DISRUPTION PHENOTYPE</scope>
    <source>
        <strain>ATCC 700084 / mc(2)155</strain>
    </source>
</reference>
<reference key="9">
    <citation type="journal article" date="2011" name="Mol. Microbiol.">
        <title>Mycobacteria exploit three genetically distinct DNA double-strand break repair pathways.</title>
        <authorList>
            <person name="Gupta R."/>
            <person name="Barkan D."/>
            <person name="Redelman-Sidi G."/>
            <person name="Shuman S."/>
            <person name="Glickman M.S."/>
        </authorList>
    </citation>
    <scope>FUNCTION</scope>
    <scope>DISRUPTION PHENOTYPE</scope>
    <source>
        <strain>ATCC 700084 / mc(2)155</strain>
    </source>
</reference>
<reference key="10">
    <citation type="journal article" date="2011" name="PLoS ONE">
        <title>A Sir2-like protein participates in mycobacterial NHEJ.</title>
        <authorList>
            <person name="Li Z."/>
            <person name="Wen J."/>
            <person name="Lin Y."/>
            <person name="Wang S."/>
            <person name="Xue P."/>
            <person name="Zhang Z."/>
            <person name="Zhou Y."/>
            <person name="Wang X."/>
            <person name="Sui L."/>
            <person name="Bi L.J."/>
            <person name="Zhang X.E."/>
        </authorList>
    </citation>
    <scope>FUNCTION</scope>
    <scope>INTERACTION WITH SIR2</scope>
    <scope>SUBUNIT</scope>
    <scope>DISRUPTION PHENOTYPE</scope>
    <source>
        <strain>ATCC 700084 / mc(2)155</strain>
    </source>
</reference>
<dbReference type="EMBL" id="CP000480">
    <property type="protein sequence ID" value="ABK73702.1"/>
    <property type="status" value="ALT_INIT"/>
    <property type="molecule type" value="Genomic_DNA"/>
</dbReference>
<dbReference type="EMBL" id="CP001663">
    <property type="protein sequence ID" value="AFP41872.1"/>
    <property type="molecule type" value="Genomic_DNA"/>
</dbReference>
<dbReference type="RefSeq" id="WP_014878394.1">
    <property type="nucleotide sequence ID" value="NZ_SIJM01000006.1"/>
</dbReference>
<dbReference type="RefSeq" id="YP_889815.1">
    <property type="nucleotide sequence ID" value="NC_008596.1"/>
</dbReference>
<dbReference type="SMR" id="A0R3S7"/>
<dbReference type="STRING" id="246196.MSMEG_5580"/>
<dbReference type="PaxDb" id="246196-MSMEI_5431"/>
<dbReference type="KEGG" id="msb:LJ00_27595"/>
<dbReference type="KEGG" id="msg:MSMEI_5431"/>
<dbReference type="KEGG" id="msm:MSMEG_5580"/>
<dbReference type="PATRIC" id="fig|246196.19.peg.5441"/>
<dbReference type="eggNOG" id="COG1273">
    <property type="taxonomic scope" value="Bacteria"/>
</dbReference>
<dbReference type="OrthoDB" id="9795084at2"/>
<dbReference type="Proteomes" id="UP000000757">
    <property type="component" value="Chromosome"/>
</dbReference>
<dbReference type="Proteomes" id="UP000006158">
    <property type="component" value="Chromosome"/>
</dbReference>
<dbReference type="GO" id="GO:0003690">
    <property type="term" value="F:double-stranded DNA binding"/>
    <property type="evidence" value="ECO:0007669"/>
    <property type="project" value="UniProtKB-UniRule"/>
</dbReference>
<dbReference type="GO" id="GO:0006310">
    <property type="term" value="P:DNA recombination"/>
    <property type="evidence" value="ECO:0007669"/>
    <property type="project" value="UniProtKB-KW"/>
</dbReference>
<dbReference type="GO" id="GO:0006303">
    <property type="term" value="P:double-strand break repair via nonhomologous end joining"/>
    <property type="evidence" value="ECO:0000315"/>
    <property type="project" value="UniProtKB"/>
</dbReference>
<dbReference type="CDD" id="cd00789">
    <property type="entry name" value="KU_like"/>
    <property type="match status" value="1"/>
</dbReference>
<dbReference type="FunFam" id="2.40.290.10:FF:000004">
    <property type="entry name" value="Non-homologous end joining protein Ku"/>
    <property type="match status" value="1"/>
</dbReference>
<dbReference type="Gene3D" id="2.40.290.10">
    <property type="match status" value="1"/>
</dbReference>
<dbReference type="HAMAP" id="MF_01875">
    <property type="entry name" value="Prokaryotic_Ku"/>
    <property type="match status" value="1"/>
</dbReference>
<dbReference type="InterPro" id="IPR006164">
    <property type="entry name" value="Ku70/Ku80_beta-barrel_dom"/>
</dbReference>
<dbReference type="InterPro" id="IPR009187">
    <property type="entry name" value="Prok_Ku"/>
</dbReference>
<dbReference type="InterPro" id="IPR016194">
    <property type="entry name" value="SPOC-like_C_dom_sf"/>
</dbReference>
<dbReference type="NCBIfam" id="TIGR02772">
    <property type="entry name" value="Ku_bact"/>
    <property type="match status" value="1"/>
</dbReference>
<dbReference type="PANTHER" id="PTHR41251">
    <property type="entry name" value="NON-HOMOLOGOUS END JOINING PROTEIN KU"/>
    <property type="match status" value="1"/>
</dbReference>
<dbReference type="PANTHER" id="PTHR41251:SF1">
    <property type="entry name" value="NON-HOMOLOGOUS END JOINING PROTEIN KU"/>
    <property type="match status" value="1"/>
</dbReference>
<dbReference type="Pfam" id="PF02735">
    <property type="entry name" value="Ku"/>
    <property type="match status" value="1"/>
</dbReference>
<dbReference type="PIRSF" id="PIRSF006493">
    <property type="entry name" value="Prok_Ku"/>
    <property type="match status" value="1"/>
</dbReference>
<dbReference type="SMART" id="SM00559">
    <property type="entry name" value="Ku78"/>
    <property type="match status" value="1"/>
</dbReference>
<dbReference type="SUPFAM" id="SSF100939">
    <property type="entry name" value="SPOC domain-like"/>
    <property type="match status" value="1"/>
</dbReference>
<gene>
    <name evidence="1" type="primary">ku</name>
    <name type="ordered locus">MSMEG_5580</name>
    <name type="ordered locus">MSMEI_5431</name>
</gene>
<protein>
    <recommendedName>
        <fullName evidence="1">Non-homologous end joining protein Ku</fullName>
    </recommendedName>
</protein>
<organism>
    <name type="scientific">Mycolicibacterium smegmatis (strain ATCC 700084 / mc(2)155)</name>
    <name type="common">Mycobacterium smegmatis</name>
    <dbReference type="NCBI Taxonomy" id="246196"/>
    <lineage>
        <taxon>Bacteria</taxon>
        <taxon>Bacillati</taxon>
        <taxon>Actinomycetota</taxon>
        <taxon>Actinomycetes</taxon>
        <taxon>Mycobacteriales</taxon>
        <taxon>Mycobacteriaceae</taxon>
        <taxon>Mycolicibacterium</taxon>
    </lineage>
</organism>
<comment type="function">
    <text evidence="3 4 5 7 8 9">With LigD forms a non-homologous end joining (NHEJ) repair enzyme which repairs blunt-end and 5'-overhang double strand breaks (DSB) with about 50% fidelity, and DSB with non-complementary 3' ends. Plays a partial role in NHEJ on 3'-overhang repair of complementary ends. NHEJ repairs DSB with blunt ends and 5' overhangs with a high level of nucleotide insertion/deletion, without a need for microhomology. This protein but not LigD also suppresses homologous recombination. Overexpression dramatically increases the efficiency of NHEJ with no effect on repair fidelity.</text>
</comment>
<comment type="subunit">
    <text evidence="9">Homodimer. Interacts with Sir2 and probably also with LigD; may form a trimeric complex during NHEJ.</text>
</comment>
<comment type="disruption phenotype">
    <text evidence="3 5 6 7 8 9">Not essential for growth in the absence of DNA damage. 500-fold less efficient for NHEJ on blunt-ended or 5'overhang DSBs, 4-fold less efficient in repair of 3'-overhang DSBs. The fidelity of DNA repair depends on the form of the DSB; for blunt-ends fidelity is very low, and no longer entails nucleotide insertion, for 5'-overhangs remains 50% faithful but with very little nucleotide insertion, for 3'-overhangs repair is fully faithful. 1000-fold decrease in viability when exposed to ionizing radiation in late and stationary phase; not exacerbated by a double ligD-ku deletion. Decreased resistance to desiccation-induced DSBs. Loss of NHEJ on incompatible 3'-chromosomal overhangs, no effect on single-strand annealing of DSB repair, increase in homologous recombination.</text>
</comment>
<comment type="similarity">
    <text evidence="1">Belongs to the prokaryotic Ku family.</text>
</comment>
<comment type="sequence caution" evidence="10">
    <conflict type="erroneous initiation">
        <sequence resource="EMBL-CDS" id="ABK73702"/>
    </conflict>
    <text>Extended N-terminus.</text>
</comment>
<feature type="chain" id="PRO_0000425944" description="Non-homologous end joining protein Ku">
    <location>
        <begin position="1"/>
        <end position="318"/>
    </location>
</feature>
<feature type="domain" description="Ku" evidence="1">
    <location>
        <begin position="10"/>
        <end position="193"/>
    </location>
</feature>
<feature type="region of interest" description="Disordered" evidence="2">
    <location>
        <begin position="259"/>
        <end position="318"/>
    </location>
</feature>
<feature type="compositionally biased region" description="Basic and acidic residues" evidence="2">
    <location>
        <begin position="266"/>
        <end position="289"/>
    </location>
</feature>
<feature type="compositionally biased region" description="Basic residues" evidence="2">
    <location>
        <begin position="290"/>
        <end position="318"/>
    </location>
</feature>
<name>KU_MYCS2</name>
<evidence type="ECO:0000255" key="1">
    <source>
        <dbReference type="HAMAP-Rule" id="MF_01875"/>
    </source>
</evidence>
<evidence type="ECO:0000256" key="2">
    <source>
        <dbReference type="SAM" id="MobiDB-lite"/>
    </source>
</evidence>
<evidence type="ECO:0000269" key="3">
    <source>
    </source>
</evidence>
<evidence type="ECO:0000269" key="4">
    <source>
    </source>
</evidence>
<evidence type="ECO:0000269" key="5">
    <source>
    </source>
</evidence>
<evidence type="ECO:0000269" key="6">
    <source>
    </source>
</evidence>
<evidence type="ECO:0000269" key="7">
    <source>
    </source>
</evidence>
<evidence type="ECO:0000269" key="8">
    <source>
    </source>
</evidence>
<evidence type="ECO:0000269" key="9">
    <source>
    </source>
</evidence>
<evidence type="ECO:0000305" key="10"/>
<keyword id="KW-0227">DNA damage</keyword>
<keyword id="KW-0233">DNA recombination</keyword>
<keyword id="KW-0234">DNA repair</keyword>
<keyword id="KW-0238">DNA-binding</keyword>
<keyword id="KW-1185">Reference proteome</keyword>
<sequence>MRSIWKGSIAFGLVNVPVKVYSATEDHDIKFHQVHAKDNGRIRYKRVCEVCGEVVEYRDINKAFESDDGQMVVITDEDIATLPEERSREIEVVEFIPAEQLDPLMYDKSYFLEPDSKSSKSYVLLAKTLAETDRIAIVHFSLRNKSRLAALRVKDFSKRDVMMIHTLLWPDEIRDPDFPILDKEVQIKPAELKMAGQVVESMTDDFKPDLYHDDYQEQLRELVQAKLEGGEAFSVEEQPAELDEGTEDVSDLLAKLEASVKARKGGKSDSKDDSDSESDSKESKSDSKPAKKAPAKKAAAKKSTAKKAPAKKAAAKKS</sequence>
<proteinExistence type="evidence at protein level"/>
<accession>A0R3S7</accession>
<accession>I7G886</accession>